<name>PSII_DICDI</name>
<protein>
    <recommendedName>
        <fullName>Protein psiI</fullName>
    </recommendedName>
</protein>
<dbReference type="EMBL" id="AAFI02000126">
    <property type="protein sequence ID" value="EAL62983.1"/>
    <property type="molecule type" value="Genomic_DNA"/>
</dbReference>
<dbReference type="RefSeq" id="XP_636487.1">
    <property type="nucleotide sequence ID" value="XM_631395.1"/>
</dbReference>
<dbReference type="FunCoup" id="Q54I92">
    <property type="interactions" value="12"/>
</dbReference>
<dbReference type="STRING" id="44689.Q54I92"/>
<dbReference type="GlyCosmos" id="Q54I92">
    <property type="glycosylation" value="12 sites, No reported glycans"/>
</dbReference>
<dbReference type="GlyGen" id="Q54I92">
    <property type="glycosylation" value="13 sites"/>
</dbReference>
<dbReference type="PaxDb" id="44689-DDB0232402"/>
<dbReference type="EnsemblProtists" id="EAL62983">
    <property type="protein sequence ID" value="EAL62983"/>
    <property type="gene ID" value="DDB_G0288919"/>
</dbReference>
<dbReference type="GeneID" id="8626870"/>
<dbReference type="KEGG" id="ddi:DDB_G0288919"/>
<dbReference type="dictyBase" id="DDB_G0288919">
    <property type="gene designation" value="psiI"/>
</dbReference>
<dbReference type="VEuPathDB" id="AmoebaDB:DDB_G0288919"/>
<dbReference type="eggNOG" id="ENOG502REBK">
    <property type="taxonomic scope" value="Eukaryota"/>
</dbReference>
<dbReference type="HOGENOM" id="CLU_024170_0_0_1"/>
<dbReference type="InParanoid" id="Q54I92"/>
<dbReference type="OMA" id="LITHNIT"/>
<dbReference type="PhylomeDB" id="Q54I92"/>
<dbReference type="PRO" id="PR:Q54I92"/>
<dbReference type="Proteomes" id="UP000002195">
    <property type="component" value="Chromosome 5"/>
</dbReference>
<dbReference type="GO" id="GO:0005576">
    <property type="term" value="C:extracellular region"/>
    <property type="evidence" value="ECO:0000318"/>
    <property type="project" value="GO_Central"/>
</dbReference>
<dbReference type="GO" id="GO:0016020">
    <property type="term" value="C:membrane"/>
    <property type="evidence" value="ECO:0007669"/>
    <property type="project" value="UniProtKB-SubCell"/>
</dbReference>
<dbReference type="InterPro" id="IPR011874">
    <property type="entry name" value="Fibro_Slime"/>
</dbReference>
<dbReference type="InterPro" id="IPR037524">
    <property type="entry name" value="PA14/GLEYA"/>
</dbReference>
<dbReference type="InterPro" id="IPR011658">
    <property type="entry name" value="PA14_dom"/>
</dbReference>
<dbReference type="InterPro" id="IPR051154">
    <property type="entry name" value="Prespore-cell_inducing_factor"/>
</dbReference>
<dbReference type="NCBIfam" id="TIGR02148">
    <property type="entry name" value="Fibro_Slime"/>
    <property type="match status" value="1"/>
</dbReference>
<dbReference type="PANTHER" id="PTHR31137">
    <property type="entry name" value="PROTEIN PSIB-RELATED-RELATED"/>
    <property type="match status" value="1"/>
</dbReference>
<dbReference type="PANTHER" id="PTHR31137:SF31">
    <property type="entry name" value="PROTEIN PSIH-RELATED"/>
    <property type="match status" value="1"/>
</dbReference>
<dbReference type="Pfam" id="PF07691">
    <property type="entry name" value="PA14"/>
    <property type="match status" value="1"/>
</dbReference>
<dbReference type="SMART" id="SM00758">
    <property type="entry name" value="PA14"/>
    <property type="match status" value="1"/>
</dbReference>
<dbReference type="PROSITE" id="PS51820">
    <property type="entry name" value="PA14"/>
    <property type="match status" value="1"/>
</dbReference>
<evidence type="ECO:0000255" key="1"/>
<evidence type="ECO:0000255" key="2">
    <source>
        <dbReference type="PROSITE-ProRule" id="PRU01164"/>
    </source>
</evidence>
<evidence type="ECO:0000305" key="3"/>
<comment type="subcellular location">
    <subcellularLocation>
        <location evidence="3">Membrane</location>
        <topology evidence="3">Single-pass type I membrane protein</topology>
    </subcellularLocation>
</comment>
<comment type="similarity">
    <text evidence="3">Belongs to the prespore-cell-inducing factor family.</text>
</comment>
<accession>Q54I92</accession>
<sequence>MKIIFNLLILFSLVNFINSQSTTQATTLKLEGTIYDQYPYYDNNFEPIAGSLTTRLVQNAINTTTRTPTLNTLLPFTTTNVMGRMVTPSLFQYFYQPNKNAPLTNNSGANFPIPMTVNLTLNPSTGTYVYDNQFFFPIDYQGFDTNPFYRNYTDGTDYHNFHFCLKINTRFTYTGNEVFYFVGDDDVWVFINDQLVIDLGGLHEAAGKNIDLTTLGLTKNKDYTFDFFYCERHTTKSTIRIETSIQAYCPFYDYCGVCYGDGSTCCDPVVNCNDGDLCTIDSCPPRDTIIPAGFSISDLCQHAPVSCPSIDMCTNNTCDSKSGQCTPTSIKCDDKSSQCLTLKPCDPSSGCLYTSSCTSAHNPCNTGACSNGQCQTKSNSTCAAELGNDPCKVYYCDINSGCVSQPLCKQGPDSCEQNVCNAGVCTIKKLDPSVCSCGCVLNKCQKNNCVTASNGTSVCSPLPLDEIDDGNPCTDDHCDETTGLITHNITTKCTGCMKCNTTTGSCSPTNNECQDGNECTDNICVAAATNINQGECSNKTVSCPTTDKCLVYTCDTNKGCVSKPVVCPNSGNCQVGVCDSVKGCTLVPRVCNSTAFCLVSQCDEAIGCITFEKRCSPDNSKCQSGVCVNATATEPGKCKSVDYDPKPFICQTGAIVSTAVVASVVVVGAVVLGAAIFAGKKGYDHWKANQGQVFASSNANPLYQQSNNGGENALFEAPQ</sequence>
<gene>
    <name type="primary">psiI</name>
    <name type="ORF">DDB_G0288919</name>
</gene>
<organism>
    <name type="scientific">Dictyostelium discoideum</name>
    <name type="common">Social amoeba</name>
    <dbReference type="NCBI Taxonomy" id="44689"/>
    <lineage>
        <taxon>Eukaryota</taxon>
        <taxon>Amoebozoa</taxon>
        <taxon>Evosea</taxon>
        <taxon>Eumycetozoa</taxon>
        <taxon>Dictyostelia</taxon>
        <taxon>Dictyosteliales</taxon>
        <taxon>Dictyosteliaceae</taxon>
        <taxon>Dictyostelium</taxon>
    </lineage>
</organism>
<keyword id="KW-0325">Glycoprotein</keyword>
<keyword id="KW-0472">Membrane</keyword>
<keyword id="KW-1185">Reference proteome</keyword>
<keyword id="KW-0732">Signal</keyword>
<keyword id="KW-0812">Transmembrane</keyword>
<keyword id="KW-1133">Transmembrane helix</keyword>
<proteinExistence type="inferred from homology"/>
<feature type="signal peptide" evidence="1">
    <location>
        <begin position="1"/>
        <end position="19"/>
    </location>
</feature>
<feature type="chain" id="PRO_0000327544" description="Protein psiI">
    <location>
        <begin position="20"/>
        <end position="719"/>
    </location>
</feature>
<feature type="topological domain" description="Extracellular" evidence="1">
    <location>
        <begin position="20"/>
        <end position="658"/>
    </location>
</feature>
<feature type="transmembrane region" description="Helical" evidence="1">
    <location>
        <begin position="659"/>
        <end position="679"/>
    </location>
</feature>
<feature type="topological domain" description="Cytoplasmic" evidence="1">
    <location>
        <begin position="680"/>
        <end position="719"/>
    </location>
</feature>
<feature type="domain" description="PA14" evidence="2">
    <location>
        <begin position="119"/>
        <end position="261"/>
    </location>
</feature>
<feature type="glycosylation site" description="N-linked (GlcNAc...) asparagine" evidence="1">
    <location>
        <position position="62"/>
    </location>
</feature>
<feature type="glycosylation site" description="N-linked (GlcNAc...) asparagine" evidence="1">
    <location>
        <position position="105"/>
    </location>
</feature>
<feature type="glycosylation site" description="N-linked (GlcNAc...) asparagine" evidence="1">
    <location>
        <position position="118"/>
    </location>
</feature>
<feature type="glycosylation site" description="N-linked (GlcNAc...) asparagine" evidence="1">
    <location>
        <position position="151"/>
    </location>
</feature>
<feature type="glycosylation site" description="N-linked (GlcNAc...) asparagine" evidence="1">
    <location>
        <position position="315"/>
    </location>
</feature>
<feature type="glycosylation site" description="N-linked (GlcNAc...) asparagine" evidence="1">
    <location>
        <position position="379"/>
    </location>
</feature>
<feature type="glycosylation site" description="N-linked (GlcNAc...) asparagine" evidence="1">
    <location>
        <position position="454"/>
    </location>
</feature>
<feature type="glycosylation site" description="N-linked (GlcNAc...) asparagine" evidence="1">
    <location>
        <position position="488"/>
    </location>
</feature>
<feature type="glycosylation site" description="N-linked (GlcNAc...) asparagine" evidence="1">
    <location>
        <position position="500"/>
    </location>
</feature>
<feature type="glycosylation site" description="N-linked (GlcNAc...) asparagine" evidence="1">
    <location>
        <position position="538"/>
    </location>
</feature>
<feature type="glycosylation site" description="N-linked (GlcNAc...) asparagine" evidence="1">
    <location>
        <position position="592"/>
    </location>
</feature>
<feature type="glycosylation site" description="N-linked (GlcNAc...) asparagine" evidence="1">
    <location>
        <position position="629"/>
    </location>
</feature>
<reference key="1">
    <citation type="journal article" date="2005" name="Nature">
        <title>The genome of the social amoeba Dictyostelium discoideum.</title>
        <authorList>
            <person name="Eichinger L."/>
            <person name="Pachebat J.A."/>
            <person name="Gloeckner G."/>
            <person name="Rajandream M.A."/>
            <person name="Sucgang R."/>
            <person name="Berriman M."/>
            <person name="Song J."/>
            <person name="Olsen R."/>
            <person name="Szafranski K."/>
            <person name="Xu Q."/>
            <person name="Tunggal B."/>
            <person name="Kummerfeld S."/>
            <person name="Madera M."/>
            <person name="Konfortov B.A."/>
            <person name="Rivero F."/>
            <person name="Bankier A.T."/>
            <person name="Lehmann R."/>
            <person name="Hamlin N."/>
            <person name="Davies R."/>
            <person name="Gaudet P."/>
            <person name="Fey P."/>
            <person name="Pilcher K."/>
            <person name="Chen G."/>
            <person name="Saunders D."/>
            <person name="Sodergren E.J."/>
            <person name="Davis P."/>
            <person name="Kerhornou A."/>
            <person name="Nie X."/>
            <person name="Hall N."/>
            <person name="Anjard C."/>
            <person name="Hemphill L."/>
            <person name="Bason N."/>
            <person name="Farbrother P."/>
            <person name="Desany B."/>
            <person name="Just E."/>
            <person name="Morio T."/>
            <person name="Rost R."/>
            <person name="Churcher C.M."/>
            <person name="Cooper J."/>
            <person name="Haydock S."/>
            <person name="van Driessche N."/>
            <person name="Cronin A."/>
            <person name="Goodhead I."/>
            <person name="Muzny D.M."/>
            <person name="Mourier T."/>
            <person name="Pain A."/>
            <person name="Lu M."/>
            <person name="Harper D."/>
            <person name="Lindsay R."/>
            <person name="Hauser H."/>
            <person name="James K.D."/>
            <person name="Quiles M."/>
            <person name="Madan Babu M."/>
            <person name="Saito T."/>
            <person name="Buchrieser C."/>
            <person name="Wardroper A."/>
            <person name="Felder M."/>
            <person name="Thangavelu M."/>
            <person name="Johnson D."/>
            <person name="Knights A."/>
            <person name="Loulseged H."/>
            <person name="Mungall K.L."/>
            <person name="Oliver K."/>
            <person name="Price C."/>
            <person name="Quail M.A."/>
            <person name="Urushihara H."/>
            <person name="Hernandez J."/>
            <person name="Rabbinowitsch E."/>
            <person name="Steffen D."/>
            <person name="Sanders M."/>
            <person name="Ma J."/>
            <person name="Kohara Y."/>
            <person name="Sharp S."/>
            <person name="Simmonds M.N."/>
            <person name="Spiegler S."/>
            <person name="Tivey A."/>
            <person name="Sugano S."/>
            <person name="White B."/>
            <person name="Walker D."/>
            <person name="Woodward J.R."/>
            <person name="Winckler T."/>
            <person name="Tanaka Y."/>
            <person name="Shaulsky G."/>
            <person name="Schleicher M."/>
            <person name="Weinstock G.M."/>
            <person name="Rosenthal A."/>
            <person name="Cox E.C."/>
            <person name="Chisholm R.L."/>
            <person name="Gibbs R.A."/>
            <person name="Loomis W.F."/>
            <person name="Platzer M."/>
            <person name="Kay R.R."/>
            <person name="Williams J.G."/>
            <person name="Dear P.H."/>
            <person name="Noegel A.A."/>
            <person name="Barrell B.G."/>
            <person name="Kuspa A."/>
        </authorList>
    </citation>
    <scope>NUCLEOTIDE SEQUENCE [LARGE SCALE GENOMIC DNA]</scope>
    <source>
        <strain>AX4</strain>
    </source>
</reference>